<organism>
    <name type="scientific">Macaca fascicularis</name>
    <name type="common">Crab-eating macaque</name>
    <name type="synonym">Cynomolgus monkey</name>
    <dbReference type="NCBI Taxonomy" id="9541"/>
    <lineage>
        <taxon>Eukaryota</taxon>
        <taxon>Metazoa</taxon>
        <taxon>Chordata</taxon>
        <taxon>Craniata</taxon>
        <taxon>Vertebrata</taxon>
        <taxon>Euteleostomi</taxon>
        <taxon>Mammalia</taxon>
        <taxon>Eutheria</taxon>
        <taxon>Euarchontoglires</taxon>
        <taxon>Primates</taxon>
        <taxon>Haplorrhini</taxon>
        <taxon>Catarrhini</taxon>
        <taxon>Cercopithecidae</taxon>
        <taxon>Cercopithecinae</taxon>
        <taxon>Macaca</taxon>
    </lineage>
</organism>
<proteinExistence type="evidence at transcript level"/>
<reference key="1">
    <citation type="submission" date="2005-06" db="EMBL/GenBank/DDBJ databases">
        <title>DNA sequences of macaque genes expressed in brain or testis and its evolutionary implications.</title>
        <authorList>
            <consortium name="International consortium for macaque cDNA sequencing and analysis"/>
        </authorList>
    </citation>
    <scope>NUCLEOTIDE SEQUENCE [LARGE SCALE MRNA]</scope>
    <source>
        <tissue>Parietal cortex</tissue>
    </source>
</reference>
<feature type="chain" id="PRO_0000271608" description="Novel acetylcholine receptor chaperone">
    <location>
        <begin position="1"/>
        <end position="167"/>
    </location>
</feature>
<feature type="topological domain" description="Cytoplasmic" evidence="6">
    <location>
        <begin position="1"/>
        <end position="5"/>
    </location>
</feature>
<feature type="transmembrane region" description="Helical; Name=1" evidence="4">
    <location>
        <begin position="6"/>
        <end position="26"/>
    </location>
</feature>
<feature type="topological domain" description="Lumenal" evidence="6">
    <location>
        <begin position="27"/>
        <end position="61"/>
    </location>
</feature>
<feature type="transmembrane region" description="Helical; Name=2" evidence="4">
    <location>
        <begin position="62"/>
        <end position="82"/>
    </location>
</feature>
<feature type="topological domain" description="Cytoplasmic" evidence="6">
    <location>
        <begin position="83"/>
        <end position="88"/>
    </location>
</feature>
<feature type="transmembrane region" description="Helical; Name=3" evidence="4">
    <location>
        <begin position="89"/>
        <end position="109"/>
    </location>
</feature>
<feature type="topological domain" description="Lumenal" evidence="6">
    <location>
        <begin position="110"/>
        <end position="114"/>
    </location>
</feature>
<feature type="transmembrane region" description="Helical; Name=4" evidence="4">
    <location>
        <begin position="115"/>
        <end position="132"/>
    </location>
</feature>
<feature type="topological domain" description="Cytoplasmic" evidence="6">
    <location>
        <begin position="133"/>
        <end position="167"/>
    </location>
</feature>
<feature type="region of interest" description="Interaction with NGFR" evidence="2">
    <location>
        <begin position="43"/>
        <end position="54"/>
    </location>
</feature>
<feature type="region of interest" description="Disordered" evidence="5">
    <location>
        <begin position="136"/>
        <end position="167"/>
    </location>
</feature>
<dbReference type="EMBL" id="AB169589">
    <property type="protein sequence ID" value="BAE01671.1"/>
    <property type="molecule type" value="mRNA"/>
</dbReference>
<dbReference type="RefSeq" id="NP_001270235.1">
    <property type="nucleotide sequence ID" value="NM_001283306.1"/>
</dbReference>
<dbReference type="RefSeq" id="XP_045239195.1">
    <property type="nucleotide sequence ID" value="XM_045383260.2"/>
</dbReference>
<dbReference type="SMR" id="Q4R5F4"/>
<dbReference type="STRING" id="9541.ENSMFAP00000027027"/>
<dbReference type="Ensembl" id="ENSMFAT00000001209.2">
    <property type="protein sequence ID" value="ENSMFAP00000027027.1"/>
    <property type="gene ID" value="ENSMFAG00000044929.2"/>
</dbReference>
<dbReference type="GeneID" id="101926690"/>
<dbReference type="VEuPathDB" id="HostDB:ENSMFAG00000044929"/>
<dbReference type="eggNOG" id="ENOG502RXPR">
    <property type="taxonomic scope" value="Eukaryota"/>
</dbReference>
<dbReference type="GeneTree" id="ENSGT00940000154325"/>
<dbReference type="OMA" id="YQTSRRE"/>
<dbReference type="Proteomes" id="UP000233100">
    <property type="component" value="Chromosome X"/>
</dbReference>
<dbReference type="Bgee" id="ENSMFAG00000044929">
    <property type="expression patterns" value="Expressed in temporal lobe and 4 other cell types or tissues"/>
</dbReference>
<dbReference type="GO" id="GO:0031410">
    <property type="term" value="C:cytoplasmic vesicle"/>
    <property type="evidence" value="ECO:0007669"/>
    <property type="project" value="UniProtKB-KW"/>
</dbReference>
<dbReference type="GO" id="GO:0005783">
    <property type="term" value="C:endoplasmic reticulum"/>
    <property type="evidence" value="ECO:0000250"/>
    <property type="project" value="UniProtKB"/>
</dbReference>
<dbReference type="GO" id="GO:0005789">
    <property type="term" value="C:endoplasmic reticulum membrane"/>
    <property type="evidence" value="ECO:0007669"/>
    <property type="project" value="UniProtKB-SubCell"/>
</dbReference>
<dbReference type="GO" id="GO:0005778">
    <property type="term" value="C:peroxisomal membrane"/>
    <property type="evidence" value="ECO:0007669"/>
    <property type="project" value="UniProtKB-SubCell"/>
</dbReference>
<dbReference type="GO" id="GO:0030548">
    <property type="term" value="F:acetylcholine receptor regulator activity"/>
    <property type="evidence" value="ECO:0007669"/>
    <property type="project" value="Ensembl"/>
</dbReference>
<dbReference type="GO" id="GO:0051131">
    <property type="term" value="P:chaperone-mediated protein complex assembly"/>
    <property type="evidence" value="ECO:0000250"/>
    <property type="project" value="UniProtKB"/>
</dbReference>
<dbReference type="GO" id="GO:2000010">
    <property type="term" value="P:positive regulation of protein localization to cell surface"/>
    <property type="evidence" value="ECO:0000250"/>
    <property type="project" value="UniProtKB"/>
</dbReference>
<dbReference type="InterPro" id="IPR040399">
    <property type="entry name" value="TMEM35A/B"/>
</dbReference>
<dbReference type="PANTHER" id="PTHR13163:SF0">
    <property type="entry name" value="NOVEL ACETYLCHOLINE RECEPTOR CHAPERONE"/>
    <property type="match status" value="1"/>
</dbReference>
<dbReference type="PANTHER" id="PTHR13163">
    <property type="entry name" value="SPINAL CORD EXPRESSION PROTEIN 4"/>
    <property type="match status" value="1"/>
</dbReference>
<gene>
    <name type="primary">TMEM35A</name>
    <name evidence="1" type="synonym">NACHO</name>
    <name type="synonym">TMEM35</name>
    <name type="ORF">QnpA-14372</name>
</gene>
<protein>
    <recommendedName>
        <fullName evidence="1">Novel acetylcholine receptor chaperone</fullName>
    </recommendedName>
    <alternativeName>
        <fullName>Transmembrane protein 35A</fullName>
    </alternativeName>
</protein>
<accession>Q4R5F4</accession>
<sequence length="167" mass="18440">MASPRTVTIVALSVALGLFFVFMGTIKLTPRLSKDAYSEMKRAYKSYVRALPLLKKMGINSILLRKSIGALEVACGIVMTLVPGRPKDVANFFLLLLVLAVLFFHQLVGDPLKRYAHALVFGILLTCRLLIARKPEDRSSEKKPLPGNAEEQPSLYEKAPQGKVKVS</sequence>
<keyword id="KW-0143">Chaperone</keyword>
<keyword id="KW-0968">Cytoplasmic vesicle</keyword>
<keyword id="KW-0256">Endoplasmic reticulum</keyword>
<keyword id="KW-0472">Membrane</keyword>
<keyword id="KW-0576">Peroxisome</keyword>
<keyword id="KW-1185">Reference proteome</keyword>
<keyword id="KW-0812">Transmembrane</keyword>
<keyword id="KW-1133">Transmembrane helix</keyword>
<name>NACHO_MACFA</name>
<evidence type="ECO:0000250" key="1">
    <source>
        <dbReference type="UniProtKB" id="Q53FP2"/>
    </source>
</evidence>
<evidence type="ECO:0000250" key="2">
    <source>
        <dbReference type="UniProtKB" id="Q6JAM9"/>
    </source>
</evidence>
<evidence type="ECO:0000250" key="3">
    <source>
        <dbReference type="UniProtKB" id="Q9D328"/>
    </source>
</evidence>
<evidence type="ECO:0000255" key="4"/>
<evidence type="ECO:0000256" key="5">
    <source>
        <dbReference type="SAM" id="MobiDB-lite"/>
    </source>
</evidence>
<evidence type="ECO:0000305" key="6"/>
<comment type="function">
    <text evidence="1 3">Molecular chaperone which mediates the proper assembly and functional expression of the nicotinic acetylcholine receptors (nAChRs) throughout the brain (By similarity). Essential for the proper folding, assembly, function and surface trafficking of alpha-7 (CHRNA7), alpha-4-beta-2, alpha-3-beta-2 and alpha-3-beta-4 receptors (By similarity). Stably associates with ribophorin-1 (RPN1) and ribophorin-2 (RPN2) (components of the oligosaccharyl transferase (OST) complex) and with calnexin (CANX), both of which are critical for NACHO-mediated effects on CHRNA7 assembly and function (By similarity). Facilitates the proper folding and assembly of alpha-6-beta-2 and alpha-6-beta-2-beta-3 receptors and acts at early stages of the nAChRs subunit assembly (By similarity). Promotes the expression of the alpha-4(2):beta-2(3) stoichiometric form over the alpha-4(3):beta-2(2) form (By similarity).</text>
</comment>
<comment type="subunit">
    <text evidence="2 3">May interact with NGFR (By similarity). Interacts with RPN1, RPN2 and CANX (By similarity).</text>
</comment>
<comment type="subcellular location">
    <subcellularLocation>
        <location evidence="3">Peroxisome membrane</location>
        <topology evidence="4">Multi-pass membrane protein</topology>
    </subcellularLocation>
    <subcellularLocation>
        <location evidence="2">Cytoplasmic vesicle</location>
    </subcellularLocation>
    <subcellularLocation>
        <location evidence="3">Endoplasmic reticulum membrane</location>
        <topology evidence="4">Multi-pass membrane protein</topology>
    </subcellularLocation>
    <text evidence="2">Shedding may lead to a soluble peptide.</text>
</comment>
<comment type="similarity">
    <text evidence="6">Belongs to the DoxX family.</text>
</comment>